<sequence>MPDKLIEIMAHKRREIAPLIRPVTETELAQLDASRPKPPSFADALRRPDGTLAVISEIKRRSPSAGEIKAGASAVEQARRYRAAGADALSILTDTEFFGGTLADLSDVTTEFRDQRPAPPCLRKDFMVHPVQVAQAREAGASAILIIVRALDDAEIQALYSAAQAAGLDALFEVHHETELERALHHRARIIGVNNRDLAVFKTDLALSERLIPQFPRDVIAVSESGIFTGADARRVHAVGAHAVLVGEALMKAPDPAALIAEFRAR</sequence>
<dbReference type="EC" id="4.1.1.48" evidence="1"/>
<dbReference type="EMBL" id="CP001032">
    <property type="protein sequence ID" value="ACB76831.1"/>
    <property type="molecule type" value="Genomic_DNA"/>
</dbReference>
<dbReference type="RefSeq" id="WP_012376360.1">
    <property type="nucleotide sequence ID" value="NC_010571.1"/>
</dbReference>
<dbReference type="SMR" id="B1ZW79"/>
<dbReference type="STRING" id="452637.Oter_3554"/>
<dbReference type="KEGG" id="ote:Oter_3554"/>
<dbReference type="eggNOG" id="COG0134">
    <property type="taxonomic scope" value="Bacteria"/>
</dbReference>
<dbReference type="HOGENOM" id="CLU_034247_2_0_0"/>
<dbReference type="OrthoDB" id="9804217at2"/>
<dbReference type="UniPathway" id="UPA00035">
    <property type="reaction ID" value="UER00043"/>
</dbReference>
<dbReference type="Proteomes" id="UP000007013">
    <property type="component" value="Chromosome"/>
</dbReference>
<dbReference type="GO" id="GO:0004425">
    <property type="term" value="F:indole-3-glycerol-phosphate synthase activity"/>
    <property type="evidence" value="ECO:0007669"/>
    <property type="project" value="UniProtKB-UniRule"/>
</dbReference>
<dbReference type="GO" id="GO:0004640">
    <property type="term" value="F:phosphoribosylanthranilate isomerase activity"/>
    <property type="evidence" value="ECO:0007669"/>
    <property type="project" value="TreeGrafter"/>
</dbReference>
<dbReference type="GO" id="GO:0000162">
    <property type="term" value="P:L-tryptophan biosynthetic process"/>
    <property type="evidence" value="ECO:0007669"/>
    <property type="project" value="UniProtKB-UniRule"/>
</dbReference>
<dbReference type="CDD" id="cd00331">
    <property type="entry name" value="IGPS"/>
    <property type="match status" value="1"/>
</dbReference>
<dbReference type="FunFam" id="3.20.20.70:FF:000024">
    <property type="entry name" value="Indole-3-glycerol phosphate synthase"/>
    <property type="match status" value="1"/>
</dbReference>
<dbReference type="Gene3D" id="3.20.20.70">
    <property type="entry name" value="Aldolase class I"/>
    <property type="match status" value="1"/>
</dbReference>
<dbReference type="HAMAP" id="MF_00134_B">
    <property type="entry name" value="IGPS_B"/>
    <property type="match status" value="1"/>
</dbReference>
<dbReference type="InterPro" id="IPR013785">
    <property type="entry name" value="Aldolase_TIM"/>
</dbReference>
<dbReference type="InterPro" id="IPR045186">
    <property type="entry name" value="Indole-3-glycerol_P_synth"/>
</dbReference>
<dbReference type="InterPro" id="IPR013798">
    <property type="entry name" value="Indole-3-glycerol_P_synth_dom"/>
</dbReference>
<dbReference type="InterPro" id="IPR001468">
    <property type="entry name" value="Indole-3-GlycerolPSynthase_CS"/>
</dbReference>
<dbReference type="InterPro" id="IPR011060">
    <property type="entry name" value="RibuloseP-bd_barrel"/>
</dbReference>
<dbReference type="NCBIfam" id="NF001377">
    <property type="entry name" value="PRK00278.2-4"/>
    <property type="match status" value="1"/>
</dbReference>
<dbReference type="PANTHER" id="PTHR22854:SF2">
    <property type="entry name" value="INDOLE-3-GLYCEROL-PHOSPHATE SYNTHASE"/>
    <property type="match status" value="1"/>
</dbReference>
<dbReference type="PANTHER" id="PTHR22854">
    <property type="entry name" value="TRYPTOPHAN BIOSYNTHESIS PROTEIN"/>
    <property type="match status" value="1"/>
</dbReference>
<dbReference type="Pfam" id="PF00218">
    <property type="entry name" value="IGPS"/>
    <property type="match status" value="1"/>
</dbReference>
<dbReference type="SUPFAM" id="SSF51366">
    <property type="entry name" value="Ribulose-phoshate binding barrel"/>
    <property type="match status" value="1"/>
</dbReference>
<dbReference type="PROSITE" id="PS00614">
    <property type="entry name" value="IGPS"/>
    <property type="match status" value="1"/>
</dbReference>
<feature type="chain" id="PRO_1000095875" description="Indole-3-glycerol phosphate synthase">
    <location>
        <begin position="1"/>
        <end position="266"/>
    </location>
</feature>
<comment type="catalytic activity">
    <reaction evidence="1">
        <text>1-(2-carboxyphenylamino)-1-deoxy-D-ribulose 5-phosphate + H(+) = (1S,2R)-1-C-(indol-3-yl)glycerol 3-phosphate + CO2 + H2O</text>
        <dbReference type="Rhea" id="RHEA:23476"/>
        <dbReference type="ChEBI" id="CHEBI:15377"/>
        <dbReference type="ChEBI" id="CHEBI:15378"/>
        <dbReference type="ChEBI" id="CHEBI:16526"/>
        <dbReference type="ChEBI" id="CHEBI:58613"/>
        <dbReference type="ChEBI" id="CHEBI:58866"/>
        <dbReference type="EC" id="4.1.1.48"/>
    </reaction>
</comment>
<comment type="pathway">
    <text evidence="1">Amino-acid biosynthesis; L-tryptophan biosynthesis; L-tryptophan from chorismate: step 4/5.</text>
</comment>
<comment type="similarity">
    <text evidence="1">Belongs to the TrpC family.</text>
</comment>
<organism>
    <name type="scientific">Opitutus terrae (strain DSM 11246 / JCM 15787 / PB90-1)</name>
    <dbReference type="NCBI Taxonomy" id="452637"/>
    <lineage>
        <taxon>Bacteria</taxon>
        <taxon>Pseudomonadati</taxon>
        <taxon>Verrucomicrobiota</taxon>
        <taxon>Opitutia</taxon>
        <taxon>Opitutales</taxon>
        <taxon>Opitutaceae</taxon>
        <taxon>Opitutus</taxon>
    </lineage>
</organism>
<evidence type="ECO:0000255" key="1">
    <source>
        <dbReference type="HAMAP-Rule" id="MF_00134"/>
    </source>
</evidence>
<keyword id="KW-0028">Amino-acid biosynthesis</keyword>
<keyword id="KW-0057">Aromatic amino acid biosynthesis</keyword>
<keyword id="KW-0210">Decarboxylase</keyword>
<keyword id="KW-0456">Lyase</keyword>
<keyword id="KW-1185">Reference proteome</keyword>
<keyword id="KW-0822">Tryptophan biosynthesis</keyword>
<accession>B1ZW79</accession>
<reference key="1">
    <citation type="journal article" date="2011" name="J. Bacteriol.">
        <title>Genome sequence of the verrucomicrobium Opitutus terrae PB90-1, an abundant inhabitant of rice paddy soil ecosystems.</title>
        <authorList>
            <person name="van Passel M.W."/>
            <person name="Kant R."/>
            <person name="Palva A."/>
            <person name="Copeland A."/>
            <person name="Lucas S."/>
            <person name="Lapidus A."/>
            <person name="Glavina del Rio T."/>
            <person name="Pitluck S."/>
            <person name="Goltsman E."/>
            <person name="Clum A."/>
            <person name="Sun H."/>
            <person name="Schmutz J."/>
            <person name="Larimer F.W."/>
            <person name="Land M.L."/>
            <person name="Hauser L."/>
            <person name="Kyrpides N."/>
            <person name="Mikhailova N."/>
            <person name="Richardson P.P."/>
            <person name="Janssen P.H."/>
            <person name="de Vos W.M."/>
            <person name="Smidt H."/>
        </authorList>
    </citation>
    <scope>NUCLEOTIDE SEQUENCE [LARGE SCALE GENOMIC DNA]</scope>
    <source>
        <strain>DSM 11246 / JCM 15787 / PB90-1</strain>
    </source>
</reference>
<gene>
    <name evidence="1" type="primary">trpC</name>
    <name type="ordered locus">Oter_3554</name>
</gene>
<proteinExistence type="inferred from homology"/>
<protein>
    <recommendedName>
        <fullName evidence="1">Indole-3-glycerol phosphate synthase</fullName>
        <shortName evidence="1">IGPS</shortName>
        <ecNumber evidence="1">4.1.1.48</ecNumber>
    </recommendedName>
</protein>
<name>TRPC_OPITP</name>